<evidence type="ECO:0000250" key="1"/>
<evidence type="ECO:0000269" key="2">
    <source>
    </source>
</evidence>
<evidence type="ECO:0000269" key="3">
    <source>
    </source>
</evidence>
<evidence type="ECO:0000305" key="4"/>
<sequence length="394" mass="43057">MNRIAADVQRAFENAGEKTLPIKVEEIVLGKQAADSLLDYVKRKNNQHIVLVCDANTHRIAGIDLENRLNQEGFQAECLIIPENEAGDVTADERSLIHVLIHTKQPTDVMIAVGSGTIHDIVRFAAFQRDLPFISYPTAPSVDGFTSAGAPIILYGTKTTIQTKAPSALFADLDLLKAAPQSMVAAGFGDMLGKITSLADWEISRHLAGEPYSPAGAKIVQEALAACIEHTEDIAMKTETGIRVLMESLLVSGLVMLALDHSRPASGGEHHISHWIEMELMEKKRPQILHGAKVGCAAVLLTDTYRKLAQDDGLNEFSPSRREAIQSAYQTLPRGEVLADWLRSAGGPAYFDEIGVGQDSVKNAFRHAHTLRDRCTGLRIINENKTLINHGLYE</sequence>
<feature type="chain" id="PRO_0000064659" description="Glycerol-1-phosphate dehydrogenase [NAD(P)+]">
    <location>
        <begin position="1"/>
        <end position="394"/>
    </location>
</feature>
<feature type="binding site" evidence="1">
    <location>
        <position position="54"/>
    </location>
    <ligand>
        <name>NAD(+)</name>
        <dbReference type="ChEBI" id="CHEBI:57540"/>
    </ligand>
</feature>
<feature type="binding site" evidence="1">
    <location>
        <begin position="116"/>
        <end position="120"/>
    </location>
    <ligand>
        <name>NAD(+)</name>
        <dbReference type="ChEBI" id="CHEBI:57540"/>
    </ligand>
</feature>
<feature type="binding site" evidence="1">
    <location>
        <begin position="138"/>
        <end position="141"/>
    </location>
    <ligand>
        <name>NAD(+)</name>
        <dbReference type="ChEBI" id="CHEBI:57540"/>
    </ligand>
</feature>
<feature type="binding site" evidence="1">
    <location>
        <position position="143"/>
    </location>
    <ligand>
        <name>substrate</name>
    </ligand>
</feature>
<feature type="binding site" evidence="1">
    <location>
        <position position="147"/>
    </location>
    <ligand>
        <name>NAD(+)</name>
        <dbReference type="ChEBI" id="CHEBI:57540"/>
    </ligand>
</feature>
<feature type="binding site" evidence="1">
    <location>
        <position position="190"/>
    </location>
    <ligand>
        <name>Ni(2+)</name>
        <dbReference type="ChEBI" id="CHEBI:49786"/>
        <note>catalytic</note>
    </ligand>
</feature>
<feature type="binding site" evidence="1">
    <location>
        <position position="190"/>
    </location>
    <ligand>
        <name>substrate</name>
    </ligand>
</feature>
<feature type="binding site" evidence="1">
    <location>
        <position position="270"/>
    </location>
    <ligand>
        <name>Ni(2+)</name>
        <dbReference type="ChEBI" id="CHEBI:49786"/>
        <note>catalytic</note>
    </ligand>
</feature>
<feature type="binding site" evidence="1">
    <location>
        <position position="274"/>
    </location>
    <ligand>
        <name>substrate</name>
    </ligand>
</feature>
<feature type="binding site" evidence="1">
    <location>
        <position position="290"/>
    </location>
    <ligand>
        <name>Ni(2+)</name>
        <dbReference type="ChEBI" id="CHEBI:49786"/>
        <note>catalytic</note>
    </ligand>
</feature>
<feature type="sequence conflict" description="In Ref. 1; CAA61933." evidence="4" ref="1">
    <original>Y</original>
    <variation>D</variation>
    <location>
        <position position="350"/>
    </location>
</feature>
<comment type="function">
    <text evidence="3">Catalyzes the NAD(P)H-dependent reduction of dihydroxyacetonephosphate (DHAP or glycerone phosphate) to glycerol 1-phosphate (G1P). The G1P thus generated is probably used for the synthesis of phosphoglycerolipids in Gram-positive bacterial species. Prefers NADH over NADPH as coenzyme. Is also able to catalyze the reverse reaction, i.e. the NAD(+)-dependent oxidation of G1P but not of G3P. Does not possess glycerol dehydrogenase activity.</text>
</comment>
<comment type="catalytic activity">
    <reaction evidence="3">
        <text>sn-glycerol 1-phosphate + NAD(+) = dihydroxyacetone phosphate + NADH + H(+)</text>
        <dbReference type="Rhea" id="RHEA:21412"/>
        <dbReference type="ChEBI" id="CHEBI:15378"/>
        <dbReference type="ChEBI" id="CHEBI:57540"/>
        <dbReference type="ChEBI" id="CHEBI:57642"/>
        <dbReference type="ChEBI" id="CHEBI:57685"/>
        <dbReference type="ChEBI" id="CHEBI:57945"/>
        <dbReference type="EC" id="1.1.1.261"/>
    </reaction>
</comment>
<comment type="catalytic activity">
    <reaction evidence="3">
        <text>sn-glycerol 1-phosphate + NADP(+) = dihydroxyacetone phosphate + NADPH + H(+)</text>
        <dbReference type="Rhea" id="RHEA:21416"/>
        <dbReference type="ChEBI" id="CHEBI:15378"/>
        <dbReference type="ChEBI" id="CHEBI:57642"/>
        <dbReference type="ChEBI" id="CHEBI:57685"/>
        <dbReference type="ChEBI" id="CHEBI:57783"/>
        <dbReference type="ChEBI" id="CHEBI:58349"/>
        <dbReference type="EC" id="1.1.1.261"/>
    </reaction>
</comment>
<comment type="cofactor">
    <cofactor evidence="3">
        <name>Ni(2+)</name>
        <dbReference type="ChEBI" id="CHEBI:49786"/>
    </cofactor>
    <text evidence="3">Binds 1 nickel ion per subunit. Is not active with other divalent metal cations such as Zn(2+), Cu(2+), Ca(2+), Mg(2+), Mn(2+) or Fe(2+).</text>
</comment>
<comment type="biophysicochemical properties">
    <kinetics>
        <KM evidence="3">8.1 uM for DHAP</KM>
        <KM evidence="3">16 uM for NADH</KM>
        <KM evidence="3">1370 uM for G1P</KM>
        <KM evidence="3">59.3 uM for NAD(+)</KM>
    </kinetics>
    <phDependence>
        <text evidence="3">Optimum pH is 8.2.</text>
    </phDependence>
</comment>
<comment type="subunit">
    <text evidence="3">Homodimer.</text>
</comment>
<comment type="subcellular location">
    <subcellularLocation>
        <location evidence="4">Cytoplasm</location>
    </subcellularLocation>
</comment>
<comment type="induction">
    <text evidence="2">Transcription is repressed by glucose and by the binding of AraR to the operon promoter. L-arabinose acts as an inducer by inhibiting the binding of AraR to the DNA, thus allowing expression of the gene.</text>
</comment>
<comment type="similarity">
    <text evidence="4">Belongs to the glycerol-1-phosphate dehydrogenase family.</text>
</comment>
<organism>
    <name type="scientific">Bacillus subtilis (strain 168)</name>
    <dbReference type="NCBI Taxonomy" id="224308"/>
    <lineage>
        <taxon>Bacteria</taxon>
        <taxon>Bacillati</taxon>
        <taxon>Bacillota</taxon>
        <taxon>Bacilli</taxon>
        <taxon>Bacillales</taxon>
        <taxon>Bacillaceae</taxon>
        <taxon>Bacillus</taxon>
    </lineage>
</organism>
<proteinExistence type="evidence at protein level"/>
<protein>
    <recommendedName>
        <fullName>Glycerol-1-phosphate dehydrogenase [NAD(P)+]</fullName>
        <shortName>G1P dehydrogenase</shortName>
        <shortName>G1PDH</shortName>
        <ecNumber evidence="3">1.1.1.261</ecNumber>
    </recommendedName>
    <alternativeName>
        <fullName>Arabinose operon protein AraM</fullName>
    </alternativeName>
    <alternativeName>
        <fullName>Enantiomeric glycerophosphate synthase</fullName>
    </alternativeName>
    <alternativeName>
        <fullName>sn-glycerol-1-phosphate dehydrogenase</fullName>
    </alternativeName>
</protein>
<keyword id="KW-0963">Cytoplasm</keyword>
<keyword id="KW-0444">Lipid biosynthesis</keyword>
<keyword id="KW-0443">Lipid metabolism</keyword>
<keyword id="KW-0479">Metal-binding</keyword>
<keyword id="KW-0520">NAD</keyword>
<keyword id="KW-0521">NADP</keyword>
<keyword id="KW-0533">Nickel</keyword>
<keyword id="KW-0560">Oxidoreductase</keyword>
<keyword id="KW-0594">Phospholipid biosynthesis</keyword>
<keyword id="KW-1208">Phospholipid metabolism</keyword>
<keyword id="KW-1185">Reference proteome</keyword>
<name>G1PDH_BACSU</name>
<reference key="1">
    <citation type="journal article" date="1997" name="Microbiology">
        <title>The Bacillus subtilis L-arabinose (ara) operon: nucleotide sequence, genetic organization and expression.</title>
        <authorList>
            <person name="Sa-Nogueira I.M.G."/>
            <person name="Nogueira T.V."/>
            <person name="Soares S."/>
            <person name="de Lencastre H."/>
        </authorList>
    </citation>
    <scope>NUCLEOTIDE SEQUENCE [GENOMIC DNA]</scope>
    <source>
        <strain>168</strain>
    </source>
</reference>
<reference key="2">
    <citation type="journal article" date="1996" name="Microbiology">
        <title>The dnaB-pheA (256 degrees-240 degrees) region of the Bacillus subtilis chromosome containing genes responsible for stress responses, the utilization of plant cell walls and primary metabolism.</title>
        <authorList>
            <person name="Wipat A."/>
            <person name="Carter N."/>
            <person name="Brignell C.S."/>
            <person name="Guy J.B."/>
            <person name="Piper K."/>
            <person name="Sanders J."/>
            <person name="Emmerson P.T."/>
            <person name="Harwood C.R."/>
        </authorList>
    </citation>
    <scope>NUCLEOTIDE SEQUENCE [GENOMIC DNA]</scope>
    <source>
        <strain>168</strain>
    </source>
</reference>
<reference key="3">
    <citation type="journal article" date="1997" name="Nature">
        <title>The complete genome sequence of the Gram-positive bacterium Bacillus subtilis.</title>
        <authorList>
            <person name="Kunst F."/>
            <person name="Ogasawara N."/>
            <person name="Moszer I."/>
            <person name="Albertini A.M."/>
            <person name="Alloni G."/>
            <person name="Azevedo V."/>
            <person name="Bertero M.G."/>
            <person name="Bessieres P."/>
            <person name="Bolotin A."/>
            <person name="Borchert S."/>
            <person name="Borriss R."/>
            <person name="Boursier L."/>
            <person name="Brans A."/>
            <person name="Braun M."/>
            <person name="Brignell S.C."/>
            <person name="Bron S."/>
            <person name="Brouillet S."/>
            <person name="Bruschi C.V."/>
            <person name="Caldwell B."/>
            <person name="Capuano V."/>
            <person name="Carter N.M."/>
            <person name="Choi S.-K."/>
            <person name="Codani J.-J."/>
            <person name="Connerton I.F."/>
            <person name="Cummings N.J."/>
            <person name="Daniel R.A."/>
            <person name="Denizot F."/>
            <person name="Devine K.M."/>
            <person name="Duesterhoeft A."/>
            <person name="Ehrlich S.D."/>
            <person name="Emmerson P.T."/>
            <person name="Entian K.-D."/>
            <person name="Errington J."/>
            <person name="Fabret C."/>
            <person name="Ferrari E."/>
            <person name="Foulger D."/>
            <person name="Fritz C."/>
            <person name="Fujita M."/>
            <person name="Fujita Y."/>
            <person name="Fuma S."/>
            <person name="Galizzi A."/>
            <person name="Galleron N."/>
            <person name="Ghim S.-Y."/>
            <person name="Glaser P."/>
            <person name="Goffeau A."/>
            <person name="Golightly E.J."/>
            <person name="Grandi G."/>
            <person name="Guiseppi G."/>
            <person name="Guy B.J."/>
            <person name="Haga K."/>
            <person name="Haiech J."/>
            <person name="Harwood C.R."/>
            <person name="Henaut A."/>
            <person name="Hilbert H."/>
            <person name="Holsappel S."/>
            <person name="Hosono S."/>
            <person name="Hullo M.-F."/>
            <person name="Itaya M."/>
            <person name="Jones L.-M."/>
            <person name="Joris B."/>
            <person name="Karamata D."/>
            <person name="Kasahara Y."/>
            <person name="Klaerr-Blanchard M."/>
            <person name="Klein C."/>
            <person name="Kobayashi Y."/>
            <person name="Koetter P."/>
            <person name="Koningstein G."/>
            <person name="Krogh S."/>
            <person name="Kumano M."/>
            <person name="Kurita K."/>
            <person name="Lapidus A."/>
            <person name="Lardinois S."/>
            <person name="Lauber J."/>
            <person name="Lazarevic V."/>
            <person name="Lee S.-M."/>
            <person name="Levine A."/>
            <person name="Liu H."/>
            <person name="Masuda S."/>
            <person name="Mauel C."/>
            <person name="Medigue C."/>
            <person name="Medina N."/>
            <person name="Mellado R.P."/>
            <person name="Mizuno M."/>
            <person name="Moestl D."/>
            <person name="Nakai S."/>
            <person name="Noback M."/>
            <person name="Noone D."/>
            <person name="O'Reilly M."/>
            <person name="Ogawa K."/>
            <person name="Ogiwara A."/>
            <person name="Oudega B."/>
            <person name="Park S.-H."/>
            <person name="Parro V."/>
            <person name="Pohl T.M."/>
            <person name="Portetelle D."/>
            <person name="Porwollik S."/>
            <person name="Prescott A.M."/>
            <person name="Presecan E."/>
            <person name="Pujic P."/>
            <person name="Purnelle B."/>
            <person name="Rapoport G."/>
            <person name="Rey M."/>
            <person name="Reynolds S."/>
            <person name="Rieger M."/>
            <person name="Rivolta C."/>
            <person name="Rocha E."/>
            <person name="Roche B."/>
            <person name="Rose M."/>
            <person name="Sadaie Y."/>
            <person name="Sato T."/>
            <person name="Scanlan E."/>
            <person name="Schleich S."/>
            <person name="Schroeter R."/>
            <person name="Scoffone F."/>
            <person name="Sekiguchi J."/>
            <person name="Sekowska A."/>
            <person name="Seror S.J."/>
            <person name="Serror P."/>
            <person name="Shin B.-S."/>
            <person name="Soldo B."/>
            <person name="Sorokin A."/>
            <person name="Tacconi E."/>
            <person name="Takagi T."/>
            <person name="Takahashi H."/>
            <person name="Takemaru K."/>
            <person name="Takeuchi M."/>
            <person name="Tamakoshi A."/>
            <person name="Tanaka T."/>
            <person name="Terpstra P."/>
            <person name="Tognoni A."/>
            <person name="Tosato V."/>
            <person name="Uchiyama S."/>
            <person name="Vandenbol M."/>
            <person name="Vannier F."/>
            <person name="Vassarotti A."/>
            <person name="Viari A."/>
            <person name="Wambutt R."/>
            <person name="Wedler E."/>
            <person name="Wedler H."/>
            <person name="Weitzenegger T."/>
            <person name="Winters P."/>
            <person name="Wipat A."/>
            <person name="Yamamoto H."/>
            <person name="Yamane K."/>
            <person name="Yasumoto K."/>
            <person name="Yata K."/>
            <person name="Yoshida K."/>
            <person name="Yoshikawa H.-F."/>
            <person name="Zumstein E."/>
            <person name="Yoshikawa H."/>
            <person name="Danchin A."/>
        </authorList>
    </citation>
    <scope>NUCLEOTIDE SEQUENCE [LARGE SCALE GENOMIC DNA]</scope>
    <source>
        <strain>168</strain>
    </source>
</reference>
<reference key="4">
    <citation type="journal article" date="1999" name="Mol. Microbiol.">
        <title>Mode of action of AraR, the key regulator of L-arabinose metabolism in Bacillus subtilis.</title>
        <authorList>
            <person name="Mota L.J."/>
            <person name="Tavares P."/>
            <person name="Sa-Nogueira I.M.G."/>
        </authorList>
    </citation>
    <scope>TRANSCRIPTIONAL REGULATION</scope>
</reference>
<reference key="5">
    <citation type="journal article" date="2008" name="Biochemistry">
        <title>Identification and characterization of a bacterial glycerol-1-phosphate dehydrogenase: Ni(2+)-dependent AraM from Bacillus subtilis.</title>
        <authorList>
            <person name="Guldan H."/>
            <person name="Sterner R."/>
            <person name="Babinger P."/>
        </authorList>
    </citation>
    <scope>FUNCTION</scope>
    <scope>CATALYTIC ACTIVITY</scope>
    <scope>COFACTOR</scope>
    <scope>SUBSTRATE SPECIFICITY</scope>
    <scope>BIOPHYSICOCHEMICAL PROPERTIES</scope>
    <scope>SUBUNIT</scope>
    <source>
        <strain>168</strain>
    </source>
</reference>
<accession>P94527</accession>
<accession>O05092</accession>
<gene>
    <name type="primary">egsA</name>
    <name type="synonym">araM</name>
    <name type="synonym">yseB</name>
    <name type="ordered locus">BSU28760</name>
</gene>
<dbReference type="EC" id="1.1.1.261" evidence="3"/>
<dbReference type="EMBL" id="X89810">
    <property type="protein sequence ID" value="CAA61933.1"/>
    <property type="molecule type" value="Genomic_DNA"/>
</dbReference>
<dbReference type="EMBL" id="Z75208">
    <property type="protein sequence ID" value="CAA99591.1"/>
    <property type="molecule type" value="Genomic_DNA"/>
</dbReference>
<dbReference type="EMBL" id="AL009126">
    <property type="protein sequence ID" value="CAB14836.1"/>
    <property type="molecule type" value="Genomic_DNA"/>
</dbReference>
<dbReference type="PIR" id="H69587">
    <property type="entry name" value="H69587"/>
</dbReference>
<dbReference type="RefSeq" id="NP_390754.1">
    <property type="nucleotide sequence ID" value="NC_000964.3"/>
</dbReference>
<dbReference type="RefSeq" id="WP_003229504.1">
    <property type="nucleotide sequence ID" value="NZ_OZ025638.1"/>
</dbReference>
<dbReference type="SMR" id="P94527"/>
<dbReference type="FunCoup" id="P94527">
    <property type="interactions" value="91"/>
</dbReference>
<dbReference type="STRING" id="224308.BSU28760"/>
<dbReference type="SwissLipids" id="SLP:000001803"/>
<dbReference type="PaxDb" id="224308-BSU28760"/>
<dbReference type="EnsemblBacteria" id="CAB14836">
    <property type="protein sequence ID" value="CAB14836"/>
    <property type="gene ID" value="BSU_28760"/>
</dbReference>
<dbReference type="GeneID" id="938011"/>
<dbReference type="KEGG" id="bsu:BSU28760"/>
<dbReference type="PATRIC" id="fig|224308.179.peg.3124"/>
<dbReference type="eggNOG" id="COG0371">
    <property type="taxonomic scope" value="Bacteria"/>
</dbReference>
<dbReference type="InParanoid" id="P94527"/>
<dbReference type="OrthoDB" id="9763580at2"/>
<dbReference type="PhylomeDB" id="P94527"/>
<dbReference type="BioCyc" id="BSUB:BSU28760-MONOMER"/>
<dbReference type="SABIO-RK" id="P94527"/>
<dbReference type="Proteomes" id="UP000001570">
    <property type="component" value="Chromosome"/>
</dbReference>
<dbReference type="GO" id="GO:0005737">
    <property type="term" value="C:cytoplasm"/>
    <property type="evidence" value="ECO:0007669"/>
    <property type="project" value="UniProtKB-SubCell"/>
</dbReference>
<dbReference type="GO" id="GO:0003856">
    <property type="term" value="F:3-dehydroquinate synthase activity"/>
    <property type="evidence" value="ECO:0000318"/>
    <property type="project" value="GO_Central"/>
</dbReference>
<dbReference type="GO" id="GO:0106357">
    <property type="term" value="F:glycerol-1-phosphate dehydrogenase (NAD+) activity"/>
    <property type="evidence" value="ECO:0007669"/>
    <property type="project" value="RHEA"/>
</dbReference>
<dbReference type="GO" id="GO:0106358">
    <property type="term" value="F:glycerol-1-phosphate dehydrogenase (NADP+) activity"/>
    <property type="evidence" value="ECO:0007669"/>
    <property type="project" value="RHEA"/>
</dbReference>
<dbReference type="GO" id="GO:0046872">
    <property type="term" value="F:metal ion binding"/>
    <property type="evidence" value="ECO:0007669"/>
    <property type="project" value="UniProtKB-KW"/>
</dbReference>
<dbReference type="GO" id="GO:0006650">
    <property type="term" value="P:glycerophospholipid metabolic process"/>
    <property type="evidence" value="ECO:0007669"/>
    <property type="project" value="UniProtKB-UniRule"/>
</dbReference>
<dbReference type="GO" id="GO:0008654">
    <property type="term" value="P:phospholipid biosynthetic process"/>
    <property type="evidence" value="ECO:0007669"/>
    <property type="project" value="UniProtKB-KW"/>
</dbReference>
<dbReference type="CDD" id="cd08175">
    <property type="entry name" value="G1PDH"/>
    <property type="match status" value="1"/>
</dbReference>
<dbReference type="Gene3D" id="3.40.50.1970">
    <property type="match status" value="1"/>
</dbReference>
<dbReference type="Gene3D" id="1.20.1090.10">
    <property type="entry name" value="Dehydroquinate synthase-like - alpha domain"/>
    <property type="match status" value="1"/>
</dbReference>
<dbReference type="HAMAP" id="MF_00497_B">
    <property type="entry name" value="G1P_dehydrogenase_B"/>
    <property type="match status" value="1"/>
</dbReference>
<dbReference type="InterPro" id="IPR050071">
    <property type="entry name" value="Dehydroquinate_synthase"/>
</dbReference>
<dbReference type="InterPro" id="IPR023003">
    <property type="entry name" value="G1P_dehydrogenase_bac"/>
</dbReference>
<dbReference type="InterPro" id="IPR032837">
    <property type="entry name" value="G1PDH"/>
</dbReference>
<dbReference type="PANTHER" id="PTHR43622">
    <property type="entry name" value="3-DEHYDROQUINATE SYNTHASE"/>
    <property type="match status" value="1"/>
</dbReference>
<dbReference type="PANTHER" id="PTHR43622:SF1">
    <property type="entry name" value="3-DEHYDROQUINATE SYNTHASE"/>
    <property type="match status" value="1"/>
</dbReference>
<dbReference type="Pfam" id="PF13685">
    <property type="entry name" value="Fe-ADH_2"/>
    <property type="match status" value="1"/>
</dbReference>
<dbReference type="SUPFAM" id="SSF56796">
    <property type="entry name" value="Dehydroquinate synthase-like"/>
    <property type="match status" value="1"/>
</dbReference>